<feature type="chain" id="PRO_1000122406" description="Homoserine kinase">
    <location>
        <begin position="1"/>
        <end position="297"/>
    </location>
</feature>
<feature type="binding site" evidence="1">
    <location>
        <begin position="82"/>
        <end position="92"/>
    </location>
    <ligand>
        <name>ATP</name>
        <dbReference type="ChEBI" id="CHEBI:30616"/>
    </ligand>
</feature>
<accession>B7HNB7</accession>
<gene>
    <name evidence="1" type="primary">thrB</name>
    <name type="ordered locus">BCAH187_A2075</name>
</gene>
<reference key="1">
    <citation type="submission" date="2008-10" db="EMBL/GenBank/DDBJ databases">
        <title>Genome sequence of Bacillus cereus AH187.</title>
        <authorList>
            <person name="Dodson R.J."/>
            <person name="Durkin A.S."/>
            <person name="Rosovitz M.J."/>
            <person name="Rasko D.A."/>
            <person name="Kolsto A.B."/>
            <person name="Okstad O.A."/>
            <person name="Ravel J."/>
            <person name="Sutton G."/>
        </authorList>
    </citation>
    <scope>NUCLEOTIDE SEQUENCE [LARGE SCALE GENOMIC DNA]</scope>
    <source>
        <strain>AH187</strain>
    </source>
</reference>
<proteinExistence type="inferred from homology"/>
<evidence type="ECO:0000255" key="1">
    <source>
        <dbReference type="HAMAP-Rule" id="MF_00384"/>
    </source>
</evidence>
<protein>
    <recommendedName>
        <fullName evidence="1">Homoserine kinase</fullName>
        <shortName evidence="1">HK</shortName>
        <shortName evidence="1">HSK</shortName>
        <ecNumber evidence="1">2.7.1.39</ecNumber>
    </recommendedName>
</protein>
<dbReference type="EC" id="2.7.1.39" evidence="1"/>
<dbReference type="EMBL" id="CP001177">
    <property type="protein sequence ID" value="ACJ81455.1"/>
    <property type="molecule type" value="Genomic_DNA"/>
</dbReference>
<dbReference type="SMR" id="B7HNB7"/>
<dbReference type="KEGG" id="bcr:BCAH187_A2075"/>
<dbReference type="HOGENOM" id="CLU_041243_0_0_9"/>
<dbReference type="UniPathway" id="UPA00050">
    <property type="reaction ID" value="UER00064"/>
</dbReference>
<dbReference type="Proteomes" id="UP000002214">
    <property type="component" value="Chromosome"/>
</dbReference>
<dbReference type="GO" id="GO:0005737">
    <property type="term" value="C:cytoplasm"/>
    <property type="evidence" value="ECO:0007669"/>
    <property type="project" value="UniProtKB-SubCell"/>
</dbReference>
<dbReference type="GO" id="GO:0005524">
    <property type="term" value="F:ATP binding"/>
    <property type="evidence" value="ECO:0007669"/>
    <property type="project" value="UniProtKB-UniRule"/>
</dbReference>
<dbReference type="GO" id="GO:0004413">
    <property type="term" value="F:homoserine kinase activity"/>
    <property type="evidence" value="ECO:0007669"/>
    <property type="project" value="UniProtKB-UniRule"/>
</dbReference>
<dbReference type="GO" id="GO:0009088">
    <property type="term" value="P:threonine biosynthetic process"/>
    <property type="evidence" value="ECO:0007669"/>
    <property type="project" value="UniProtKB-UniRule"/>
</dbReference>
<dbReference type="Gene3D" id="3.30.230.10">
    <property type="match status" value="1"/>
</dbReference>
<dbReference type="Gene3D" id="3.30.70.890">
    <property type="entry name" value="GHMP kinase, C-terminal domain"/>
    <property type="match status" value="1"/>
</dbReference>
<dbReference type="HAMAP" id="MF_00384">
    <property type="entry name" value="Homoser_kinase"/>
    <property type="match status" value="1"/>
</dbReference>
<dbReference type="InterPro" id="IPR013750">
    <property type="entry name" value="GHMP_kinase_C_dom"/>
</dbReference>
<dbReference type="InterPro" id="IPR036554">
    <property type="entry name" value="GHMP_kinase_C_sf"/>
</dbReference>
<dbReference type="InterPro" id="IPR006204">
    <property type="entry name" value="GHMP_kinase_N_dom"/>
</dbReference>
<dbReference type="InterPro" id="IPR006203">
    <property type="entry name" value="GHMP_knse_ATP-bd_CS"/>
</dbReference>
<dbReference type="InterPro" id="IPR000870">
    <property type="entry name" value="Homoserine_kinase"/>
</dbReference>
<dbReference type="InterPro" id="IPR020568">
    <property type="entry name" value="Ribosomal_Su5_D2-typ_SF"/>
</dbReference>
<dbReference type="InterPro" id="IPR014721">
    <property type="entry name" value="Ribsml_uS5_D2-typ_fold_subgr"/>
</dbReference>
<dbReference type="NCBIfam" id="TIGR00191">
    <property type="entry name" value="thrB"/>
    <property type="match status" value="1"/>
</dbReference>
<dbReference type="PANTHER" id="PTHR20861:SF1">
    <property type="entry name" value="HOMOSERINE KINASE"/>
    <property type="match status" value="1"/>
</dbReference>
<dbReference type="PANTHER" id="PTHR20861">
    <property type="entry name" value="HOMOSERINE/4-DIPHOSPHOCYTIDYL-2-C-METHYL-D-ERYTHRITOL KINASE"/>
    <property type="match status" value="1"/>
</dbReference>
<dbReference type="Pfam" id="PF08544">
    <property type="entry name" value="GHMP_kinases_C"/>
    <property type="match status" value="1"/>
</dbReference>
<dbReference type="Pfam" id="PF00288">
    <property type="entry name" value="GHMP_kinases_N"/>
    <property type="match status" value="1"/>
</dbReference>
<dbReference type="PIRSF" id="PIRSF000676">
    <property type="entry name" value="Homoser_kin"/>
    <property type="match status" value="1"/>
</dbReference>
<dbReference type="PRINTS" id="PR00958">
    <property type="entry name" value="HOMSERKINASE"/>
</dbReference>
<dbReference type="SUPFAM" id="SSF55060">
    <property type="entry name" value="GHMP Kinase, C-terminal domain"/>
    <property type="match status" value="1"/>
</dbReference>
<dbReference type="SUPFAM" id="SSF54211">
    <property type="entry name" value="Ribosomal protein S5 domain 2-like"/>
    <property type="match status" value="1"/>
</dbReference>
<dbReference type="PROSITE" id="PS00627">
    <property type="entry name" value="GHMP_KINASES_ATP"/>
    <property type="match status" value="1"/>
</dbReference>
<sequence length="297" mass="32109">MIPLSIRVPASTANVGPGFDSVGIALSLYLHVVVKEESDKWQVIHSFEDSIPTDDKNLIVSTACKVCPSLSPHIIEVTSNIPLTRGLGSSASAIVAGIELANQLGNLNLTTDQKVQIATNFEGHPDNVAASILGGTVIGALDGKNVSVVRIESKELGVISLIPNEELNTEESRSVLPDVFPFHEAVKASAISNVLVAALCQKKWEVVGEMMERDHFHEPFRLELVPLLPSIRKCAKEFGAYGTALSGAGPSIFILTPYEKRQEIAEQLARVFTSMKVCELEIDHRGITVNKEEHIGL</sequence>
<comment type="function">
    <text evidence="1">Catalyzes the ATP-dependent phosphorylation of L-homoserine to L-homoserine phosphate.</text>
</comment>
<comment type="catalytic activity">
    <reaction evidence="1">
        <text>L-homoserine + ATP = O-phospho-L-homoserine + ADP + H(+)</text>
        <dbReference type="Rhea" id="RHEA:13985"/>
        <dbReference type="ChEBI" id="CHEBI:15378"/>
        <dbReference type="ChEBI" id="CHEBI:30616"/>
        <dbReference type="ChEBI" id="CHEBI:57476"/>
        <dbReference type="ChEBI" id="CHEBI:57590"/>
        <dbReference type="ChEBI" id="CHEBI:456216"/>
        <dbReference type="EC" id="2.7.1.39"/>
    </reaction>
</comment>
<comment type="pathway">
    <text evidence="1">Amino-acid biosynthesis; L-threonine biosynthesis; L-threonine from L-aspartate: step 4/5.</text>
</comment>
<comment type="subcellular location">
    <subcellularLocation>
        <location evidence="1">Cytoplasm</location>
    </subcellularLocation>
</comment>
<comment type="similarity">
    <text evidence="1">Belongs to the GHMP kinase family. Homoserine kinase subfamily.</text>
</comment>
<organism>
    <name type="scientific">Bacillus cereus (strain AH187)</name>
    <dbReference type="NCBI Taxonomy" id="405534"/>
    <lineage>
        <taxon>Bacteria</taxon>
        <taxon>Bacillati</taxon>
        <taxon>Bacillota</taxon>
        <taxon>Bacilli</taxon>
        <taxon>Bacillales</taxon>
        <taxon>Bacillaceae</taxon>
        <taxon>Bacillus</taxon>
        <taxon>Bacillus cereus group</taxon>
    </lineage>
</organism>
<keyword id="KW-0028">Amino-acid biosynthesis</keyword>
<keyword id="KW-0067">ATP-binding</keyword>
<keyword id="KW-0963">Cytoplasm</keyword>
<keyword id="KW-0418">Kinase</keyword>
<keyword id="KW-0547">Nucleotide-binding</keyword>
<keyword id="KW-0791">Threonine biosynthesis</keyword>
<keyword id="KW-0808">Transferase</keyword>
<name>KHSE_BACC7</name>